<keyword id="KW-0001">2Fe-2S</keyword>
<keyword id="KW-1015">Disulfide bond</keyword>
<keyword id="KW-0249">Electron transport</keyword>
<keyword id="KW-0408">Iron</keyword>
<keyword id="KW-0411">Iron-sulfur</keyword>
<keyword id="KW-0472">Membrane</keyword>
<keyword id="KW-0479">Metal-binding</keyword>
<keyword id="KW-0793">Thylakoid</keyword>
<keyword id="KW-1278">Translocase</keyword>
<keyword id="KW-0812">Transmembrane</keyword>
<keyword id="KW-1133">Transmembrane helix</keyword>
<keyword id="KW-0813">Transport</keyword>
<name>UCRI_CYAP4</name>
<sequence length="179" mass="19106">MAQLSGTPDVPDMGRRQFMNLLTFGSATGVALGMLYPVVRYFIPPASGGVGGGVVAKDALGNDISVSDFLAKHPANDRALAQGLKGDPTYIVVQDDHTIGDYGLNAVCTHLGCVVPWNISENKFICPCHGSQYDNTGKVVRGPAPLSLALAHAAVSDDKITFTPWTETDFRTGKEPWWT</sequence>
<organism>
    <name type="scientific">Cyanothece sp. (strain PCC 7425 / ATCC 29141)</name>
    <dbReference type="NCBI Taxonomy" id="395961"/>
    <lineage>
        <taxon>Bacteria</taxon>
        <taxon>Bacillati</taxon>
        <taxon>Cyanobacteriota</taxon>
        <taxon>Cyanophyceae</taxon>
        <taxon>Gomontiellales</taxon>
        <taxon>Cyanothecaceae</taxon>
        <taxon>Cyanothece</taxon>
    </lineage>
</organism>
<accession>B8HNR1</accession>
<protein>
    <recommendedName>
        <fullName evidence="1">Cytochrome b6-f complex iron-sulfur subunit</fullName>
        <ecNumber evidence="1">7.1.1.6</ecNumber>
    </recommendedName>
    <alternativeName>
        <fullName evidence="1">Plastohydroquinone:plastocyanin oxidoreductase iron-sulfur protein</fullName>
        <shortName evidence="1">ISP</shortName>
        <shortName evidence="1">RISP</shortName>
    </alternativeName>
    <alternativeName>
        <fullName evidence="1">Rieske iron-sulfur protein</fullName>
    </alternativeName>
</protein>
<proteinExistence type="inferred from homology"/>
<comment type="function">
    <text evidence="1">Component of the cytochrome b6-f complex, which mediates electron transfer between photosystem II (PSII) and photosystem I (PSI), cyclic electron flow around PSI, and state transitions.</text>
</comment>
<comment type="catalytic activity">
    <reaction evidence="1">
        <text>2 oxidized [plastocyanin] + a plastoquinol + 2 H(+)(in) = 2 reduced [plastocyanin] + a plastoquinone + 4 H(+)(out)</text>
        <dbReference type="Rhea" id="RHEA:22148"/>
        <dbReference type="Rhea" id="RHEA-COMP:9561"/>
        <dbReference type="Rhea" id="RHEA-COMP:9562"/>
        <dbReference type="Rhea" id="RHEA-COMP:10039"/>
        <dbReference type="Rhea" id="RHEA-COMP:10040"/>
        <dbReference type="ChEBI" id="CHEBI:15378"/>
        <dbReference type="ChEBI" id="CHEBI:17757"/>
        <dbReference type="ChEBI" id="CHEBI:29036"/>
        <dbReference type="ChEBI" id="CHEBI:49552"/>
        <dbReference type="ChEBI" id="CHEBI:62192"/>
        <dbReference type="EC" id="7.1.1.6"/>
    </reaction>
</comment>
<comment type="cofactor">
    <cofactor evidence="1">
        <name>[2Fe-2S] cluster</name>
        <dbReference type="ChEBI" id="CHEBI:190135"/>
    </cofactor>
    <text evidence="1">Binds 1 [2Fe-2S] cluster per subunit.</text>
</comment>
<comment type="subunit">
    <text evidence="1">The 4 large subunits of the cytochrome b6-f complex are cytochrome b6, subunit IV (17 kDa polypeptide, PetD), cytochrome f and the Rieske protein, while the 4 small subunits are PetG, PetL, PetM and PetN. The complex functions as a dimer.</text>
</comment>
<comment type="subcellular location">
    <subcellularLocation>
        <location evidence="1">Cellular thylakoid membrane</location>
        <topology evidence="1">Single-pass membrane protein</topology>
    </subcellularLocation>
    <text evidence="1">The transmembrane helix obliquely spans the membrane in one monomer, and its extrinsic C-terminal domain is part of the other monomer.</text>
</comment>
<comment type="miscellaneous">
    <text>The Rieske iron-sulfur protein is a high potential 2Fe-2S protein.</text>
</comment>
<comment type="similarity">
    <text evidence="1">Belongs to the Rieske iron-sulfur protein family.</text>
</comment>
<reference key="1">
    <citation type="journal article" date="2011" name="MBio">
        <title>Novel metabolic attributes of the genus Cyanothece, comprising a group of unicellular nitrogen-fixing Cyanobacteria.</title>
        <authorList>
            <person name="Bandyopadhyay A."/>
            <person name="Elvitigala T."/>
            <person name="Welsh E."/>
            <person name="Stockel J."/>
            <person name="Liberton M."/>
            <person name="Min H."/>
            <person name="Sherman L.A."/>
            <person name="Pakrasi H.B."/>
        </authorList>
    </citation>
    <scope>NUCLEOTIDE SEQUENCE [LARGE SCALE GENOMIC DNA]</scope>
    <source>
        <strain>PCC 7425 / ATCC 29141</strain>
    </source>
</reference>
<dbReference type="EC" id="7.1.1.6" evidence="1"/>
<dbReference type="EMBL" id="CP001344">
    <property type="protein sequence ID" value="ACL43792.1"/>
    <property type="molecule type" value="Genomic_DNA"/>
</dbReference>
<dbReference type="SMR" id="B8HNR1"/>
<dbReference type="STRING" id="395961.Cyan7425_1419"/>
<dbReference type="KEGG" id="cyn:Cyan7425_1419"/>
<dbReference type="eggNOG" id="COG0723">
    <property type="taxonomic scope" value="Bacteria"/>
</dbReference>
<dbReference type="HOGENOM" id="CLU_055690_8_0_3"/>
<dbReference type="OrthoDB" id="9767869at2"/>
<dbReference type="GO" id="GO:0031676">
    <property type="term" value="C:plasma membrane-derived thylakoid membrane"/>
    <property type="evidence" value="ECO:0007669"/>
    <property type="project" value="UniProtKB-SubCell"/>
</dbReference>
<dbReference type="GO" id="GO:0051537">
    <property type="term" value="F:2 iron, 2 sulfur cluster binding"/>
    <property type="evidence" value="ECO:0007669"/>
    <property type="project" value="UniProtKB-KW"/>
</dbReference>
<dbReference type="GO" id="GO:0045158">
    <property type="term" value="F:electron transporter, transferring electrons within cytochrome b6/f complex of photosystem II activity"/>
    <property type="evidence" value="ECO:0007669"/>
    <property type="project" value="UniProtKB-UniRule"/>
</dbReference>
<dbReference type="GO" id="GO:0046872">
    <property type="term" value="F:metal ion binding"/>
    <property type="evidence" value="ECO:0007669"/>
    <property type="project" value="UniProtKB-KW"/>
</dbReference>
<dbReference type="GO" id="GO:0004497">
    <property type="term" value="F:monooxygenase activity"/>
    <property type="evidence" value="ECO:0007669"/>
    <property type="project" value="UniProtKB-ARBA"/>
</dbReference>
<dbReference type="GO" id="GO:0016705">
    <property type="term" value="F:oxidoreductase activity, acting on paired donors, with incorporation or reduction of molecular oxygen"/>
    <property type="evidence" value="ECO:0007669"/>
    <property type="project" value="UniProtKB-ARBA"/>
</dbReference>
<dbReference type="GO" id="GO:0009496">
    <property type="term" value="F:plastoquinol--plastocyanin reductase activity"/>
    <property type="evidence" value="ECO:0007669"/>
    <property type="project" value="UniProtKB-UniRule"/>
</dbReference>
<dbReference type="GO" id="GO:0015979">
    <property type="term" value="P:photosynthesis"/>
    <property type="evidence" value="ECO:0007669"/>
    <property type="project" value="UniProtKB-UniRule"/>
</dbReference>
<dbReference type="CDD" id="cd03471">
    <property type="entry name" value="Rieske_cytochrome_b6f"/>
    <property type="match status" value="1"/>
</dbReference>
<dbReference type="FunFam" id="2.102.10.10:FF:000007">
    <property type="entry name" value="Cytochrome b6-f complex iron-sulfur subunit"/>
    <property type="match status" value="1"/>
</dbReference>
<dbReference type="Gene3D" id="2.102.10.10">
    <property type="entry name" value="Rieske [2Fe-2S] iron-sulphur domain"/>
    <property type="match status" value="1"/>
</dbReference>
<dbReference type="Gene3D" id="1.20.5.700">
    <property type="entry name" value="Single helix bin"/>
    <property type="match status" value="1"/>
</dbReference>
<dbReference type="HAMAP" id="MF_01335">
    <property type="entry name" value="Cytb6_f_Rieske"/>
    <property type="match status" value="1"/>
</dbReference>
<dbReference type="InterPro" id="IPR023960">
    <property type="entry name" value="Cyt_b6_f_Rieske"/>
</dbReference>
<dbReference type="InterPro" id="IPR017941">
    <property type="entry name" value="Rieske_2Fe-2S"/>
</dbReference>
<dbReference type="InterPro" id="IPR036922">
    <property type="entry name" value="Rieske_2Fe-2S_sf"/>
</dbReference>
<dbReference type="InterPro" id="IPR014349">
    <property type="entry name" value="Rieske_Fe-S_prot"/>
</dbReference>
<dbReference type="InterPro" id="IPR005805">
    <property type="entry name" value="Rieske_Fe-S_prot_C"/>
</dbReference>
<dbReference type="NCBIfam" id="NF045928">
    <property type="entry name" value="Cytb6fFeSPetC"/>
    <property type="match status" value="1"/>
</dbReference>
<dbReference type="NCBIfam" id="NF010001">
    <property type="entry name" value="PRK13474.1"/>
    <property type="match status" value="1"/>
</dbReference>
<dbReference type="PANTHER" id="PTHR10134">
    <property type="entry name" value="CYTOCHROME B-C1 COMPLEX SUBUNIT RIESKE, MITOCHONDRIAL"/>
    <property type="match status" value="1"/>
</dbReference>
<dbReference type="Pfam" id="PF00355">
    <property type="entry name" value="Rieske"/>
    <property type="match status" value="1"/>
</dbReference>
<dbReference type="Pfam" id="PF25471">
    <property type="entry name" value="TM_PetC"/>
    <property type="match status" value="1"/>
</dbReference>
<dbReference type="PRINTS" id="PR00162">
    <property type="entry name" value="RIESKE"/>
</dbReference>
<dbReference type="SUPFAM" id="SSF50022">
    <property type="entry name" value="ISP domain"/>
    <property type="match status" value="1"/>
</dbReference>
<dbReference type="PROSITE" id="PS51296">
    <property type="entry name" value="RIESKE"/>
    <property type="match status" value="1"/>
</dbReference>
<feature type="chain" id="PRO_1000166187" description="Cytochrome b6-f complex iron-sulfur subunit">
    <location>
        <begin position="1"/>
        <end position="179"/>
    </location>
</feature>
<feature type="transmembrane region" description="Helical" evidence="1">
    <location>
        <begin position="21"/>
        <end position="43"/>
    </location>
</feature>
<feature type="domain" description="Rieske" evidence="1">
    <location>
        <begin position="61"/>
        <end position="162"/>
    </location>
</feature>
<feature type="binding site" evidence="1">
    <location>
        <position position="108"/>
    </location>
    <ligand>
        <name>[2Fe-2S] cluster</name>
        <dbReference type="ChEBI" id="CHEBI:190135"/>
    </ligand>
</feature>
<feature type="binding site" evidence="1">
    <location>
        <position position="110"/>
    </location>
    <ligand>
        <name>[2Fe-2S] cluster</name>
        <dbReference type="ChEBI" id="CHEBI:190135"/>
    </ligand>
</feature>
<feature type="binding site" evidence="1">
    <location>
        <position position="126"/>
    </location>
    <ligand>
        <name>[2Fe-2S] cluster</name>
        <dbReference type="ChEBI" id="CHEBI:190135"/>
    </ligand>
</feature>
<feature type="binding site" evidence="1">
    <location>
        <position position="129"/>
    </location>
    <ligand>
        <name>[2Fe-2S] cluster</name>
        <dbReference type="ChEBI" id="CHEBI:190135"/>
    </ligand>
</feature>
<feature type="disulfide bond" evidence="1">
    <location>
        <begin position="113"/>
        <end position="128"/>
    </location>
</feature>
<gene>
    <name evidence="1" type="primary">petC</name>
    <name type="ordered locus">Cyan7425_1419</name>
</gene>
<evidence type="ECO:0000255" key="1">
    <source>
        <dbReference type="HAMAP-Rule" id="MF_01335"/>
    </source>
</evidence>